<sequence length="115" mass="12524">MPTFTVCTNVCRDSMPDTLLSDLTKLLAKATGKPAEYIAIHIMPDQMMSFGDSTDPCAVCSLSSIGKIGGPQNKSYSKLLCDYLTKQMNIPANRVYINFHDLNPANVGWNGSTFA</sequence>
<dbReference type="EC" id="5.3.2.1" evidence="1"/>
<dbReference type="EC" id="5.3.3.12" evidence="1"/>
<dbReference type="EMBL" id="BC156031">
    <property type="protein sequence ID" value="AAI56032.1"/>
    <property type="molecule type" value="mRNA"/>
</dbReference>
<dbReference type="RefSeq" id="NP_001107147.1">
    <property type="nucleotide sequence ID" value="NM_001113675.1"/>
</dbReference>
<dbReference type="SMR" id="A9JSE7"/>
<dbReference type="FunCoup" id="A9JSE7">
    <property type="interactions" value="420"/>
</dbReference>
<dbReference type="STRING" id="8364.ENSXETP00000029260"/>
<dbReference type="PaxDb" id="8364-ENSXETP00000061846"/>
<dbReference type="GeneID" id="100134996"/>
<dbReference type="KEGG" id="xtr:100134996"/>
<dbReference type="AGR" id="Xenbase:XB-GENE-487448"/>
<dbReference type="CTD" id="4282"/>
<dbReference type="Xenbase" id="XB-GENE-487448">
    <property type="gene designation" value="mif"/>
</dbReference>
<dbReference type="eggNOG" id="KOG1759">
    <property type="taxonomic scope" value="Eukaryota"/>
</dbReference>
<dbReference type="InParanoid" id="A9JSE7"/>
<dbReference type="OMA" id="YINFFDM"/>
<dbReference type="OrthoDB" id="255819at2759"/>
<dbReference type="Reactome" id="R-XTR-6798695">
    <property type="pathway name" value="Neutrophil degranulation"/>
</dbReference>
<dbReference type="Proteomes" id="UP000008143">
    <property type="component" value="Chromosome 1"/>
</dbReference>
<dbReference type="Bgee" id="ENSXETG00000030275">
    <property type="expression patterns" value="Expressed in brain and 13 other cell types or tissues"/>
</dbReference>
<dbReference type="GO" id="GO:0005737">
    <property type="term" value="C:cytoplasm"/>
    <property type="evidence" value="ECO:0007669"/>
    <property type="project" value="UniProtKB-SubCell"/>
</dbReference>
<dbReference type="GO" id="GO:0005615">
    <property type="term" value="C:extracellular space"/>
    <property type="evidence" value="ECO:0007669"/>
    <property type="project" value="UniProtKB-KW"/>
</dbReference>
<dbReference type="GO" id="GO:0005125">
    <property type="term" value="F:cytokine activity"/>
    <property type="evidence" value="ECO:0007669"/>
    <property type="project" value="UniProtKB-KW"/>
</dbReference>
<dbReference type="GO" id="GO:0004167">
    <property type="term" value="F:dopachrome isomerase activity"/>
    <property type="evidence" value="ECO:0007669"/>
    <property type="project" value="UniProtKB-EC"/>
</dbReference>
<dbReference type="GO" id="GO:0050178">
    <property type="term" value="F:phenylpyruvate tautomerase activity"/>
    <property type="evidence" value="ECO:0007669"/>
    <property type="project" value="UniProtKB-EC"/>
</dbReference>
<dbReference type="GO" id="GO:0006954">
    <property type="term" value="P:inflammatory response"/>
    <property type="evidence" value="ECO:0007669"/>
    <property type="project" value="UniProtKB-KW"/>
</dbReference>
<dbReference type="GO" id="GO:0045087">
    <property type="term" value="P:innate immune response"/>
    <property type="evidence" value="ECO:0007669"/>
    <property type="project" value="UniProtKB-KW"/>
</dbReference>
<dbReference type="Gene3D" id="3.30.429.10">
    <property type="entry name" value="Macrophage Migration Inhibitory Factor"/>
    <property type="match status" value="1"/>
</dbReference>
<dbReference type="InterPro" id="IPR001398">
    <property type="entry name" value="Macrophage_inhib_fac"/>
</dbReference>
<dbReference type="InterPro" id="IPR019829">
    <property type="entry name" value="Macrophage_inhib_fac_CS"/>
</dbReference>
<dbReference type="InterPro" id="IPR014347">
    <property type="entry name" value="Tautomerase/MIF_sf"/>
</dbReference>
<dbReference type="PANTHER" id="PTHR11954">
    <property type="entry name" value="D-DOPACHROME DECARBOXYLASE"/>
    <property type="match status" value="1"/>
</dbReference>
<dbReference type="PANTHER" id="PTHR11954:SF6">
    <property type="entry name" value="MACROPHAGE MIGRATION INHIBITORY FACTOR"/>
    <property type="match status" value="1"/>
</dbReference>
<dbReference type="Pfam" id="PF01187">
    <property type="entry name" value="MIF"/>
    <property type="match status" value="1"/>
</dbReference>
<dbReference type="SUPFAM" id="SSF55331">
    <property type="entry name" value="Tautomerase/MIF"/>
    <property type="match status" value="1"/>
</dbReference>
<dbReference type="PROSITE" id="PS01158">
    <property type="entry name" value="MIF"/>
    <property type="match status" value="1"/>
</dbReference>
<keyword id="KW-0202">Cytokine</keyword>
<keyword id="KW-0963">Cytoplasm</keyword>
<keyword id="KW-0391">Immunity</keyword>
<keyword id="KW-0395">Inflammatory response</keyword>
<keyword id="KW-0399">Innate immunity</keyword>
<keyword id="KW-0413">Isomerase</keyword>
<keyword id="KW-1185">Reference proteome</keyword>
<keyword id="KW-0964">Secreted</keyword>
<name>MIF_XENTR</name>
<comment type="function">
    <text evidence="1">Pro-inflammatory cytokine. Involved in the innate immune response to bacterial pathogens. The expression of MIF at sites of inflammation suggests a role as mediator in regulating the function of macrophages in host defense. Has phenylpyruvate tautomerase and dopachrome tautomerase activity (in vitro), but the physiological substrate is not known. It is not clear whether the tautomerase activity has any physiological relevance, and whether it is important for cytokine activity (By similarity).</text>
</comment>
<comment type="catalytic activity">
    <reaction evidence="1">
        <text>3-phenylpyruvate = enol-phenylpyruvate</text>
        <dbReference type="Rhea" id="RHEA:17097"/>
        <dbReference type="ChEBI" id="CHEBI:16815"/>
        <dbReference type="ChEBI" id="CHEBI:18005"/>
        <dbReference type="EC" id="5.3.2.1"/>
    </reaction>
</comment>
<comment type="catalytic activity">
    <reaction evidence="1">
        <text>L-dopachrome = 5,6-dihydroxyindole-2-carboxylate</text>
        <dbReference type="Rhea" id="RHEA:13041"/>
        <dbReference type="ChEBI" id="CHEBI:16875"/>
        <dbReference type="ChEBI" id="CHEBI:57509"/>
        <dbReference type="EC" id="5.3.3.12"/>
    </reaction>
</comment>
<comment type="subunit">
    <text evidence="3">Homotrimer.</text>
</comment>
<comment type="subcellular location">
    <subcellularLocation>
        <location evidence="1">Secreted</location>
    </subcellularLocation>
    <subcellularLocation>
        <location evidence="1">Cytoplasm</location>
    </subcellularLocation>
    <text evidence="1">Does not have a cleavable signal sequence and is secreted via a specialized, non-classical pathway. Secreted by macrophages upon stimulation (By similarity).</text>
</comment>
<comment type="similarity">
    <text evidence="4">Belongs to the MIF family.</text>
</comment>
<protein>
    <recommendedName>
        <fullName>Macrophage migration inhibitory factor</fullName>
        <shortName>MIF</shortName>
        <ecNumber evidence="1">5.3.2.1</ecNumber>
    </recommendedName>
    <alternativeName>
        <fullName>L-dopachrome isomerase</fullName>
    </alternativeName>
    <alternativeName>
        <fullName>L-dopachrome tautomerase</fullName>
        <ecNumber evidence="1">5.3.3.12</ecNumber>
    </alternativeName>
    <alternativeName>
        <fullName>Phenylpyruvate tautomerase</fullName>
    </alternativeName>
</protein>
<feature type="initiator methionine" description="Removed" evidence="1">
    <location>
        <position position="1"/>
    </location>
</feature>
<feature type="chain" id="PRO_0000344371" description="Macrophage migration inhibitory factor">
    <location>
        <begin position="2"/>
        <end position="115"/>
    </location>
</feature>
<feature type="active site" description="Proton acceptor; via imino nitrogen" evidence="2">
    <location>
        <position position="2"/>
    </location>
</feature>
<feature type="binding site" evidence="1">
    <location>
        <position position="33"/>
    </location>
    <ligand>
        <name>substrate</name>
    </ligand>
</feature>
<feature type="binding site" evidence="1">
    <location>
        <position position="65"/>
    </location>
    <ligand>
        <name>substrate</name>
    </ligand>
</feature>
<feature type="binding site" evidence="1">
    <location>
        <position position="98"/>
    </location>
    <ligand>
        <name>substrate</name>
    </ligand>
</feature>
<gene>
    <name type="primary">mif</name>
</gene>
<reference key="1">
    <citation type="submission" date="2007-12" db="EMBL/GenBank/DDBJ databases">
        <authorList>
            <consortium name="NIH - Xenopus Gene Collection (XGC) project"/>
        </authorList>
    </citation>
    <scope>NUCLEOTIDE SEQUENCE [LARGE SCALE MRNA]</scope>
    <source>
        <tissue>Testis</tissue>
    </source>
</reference>
<evidence type="ECO:0000250" key="1">
    <source>
        <dbReference type="UniProtKB" id="P14174"/>
    </source>
</evidence>
<evidence type="ECO:0000250" key="2">
    <source>
        <dbReference type="UniProtKB" id="P34884"/>
    </source>
</evidence>
<evidence type="ECO:0000250" key="3">
    <source>
        <dbReference type="UniProtKB" id="Q76BK2"/>
    </source>
</evidence>
<evidence type="ECO:0000305" key="4"/>
<accession>A9JSE7</accession>
<organism>
    <name type="scientific">Xenopus tropicalis</name>
    <name type="common">Western clawed frog</name>
    <name type="synonym">Silurana tropicalis</name>
    <dbReference type="NCBI Taxonomy" id="8364"/>
    <lineage>
        <taxon>Eukaryota</taxon>
        <taxon>Metazoa</taxon>
        <taxon>Chordata</taxon>
        <taxon>Craniata</taxon>
        <taxon>Vertebrata</taxon>
        <taxon>Euteleostomi</taxon>
        <taxon>Amphibia</taxon>
        <taxon>Batrachia</taxon>
        <taxon>Anura</taxon>
        <taxon>Pipoidea</taxon>
        <taxon>Pipidae</taxon>
        <taxon>Xenopodinae</taxon>
        <taxon>Xenopus</taxon>
        <taxon>Silurana</taxon>
    </lineage>
</organism>
<proteinExistence type="inferred from homology"/>